<gene>
    <name evidence="1" type="primary">rpsO</name>
    <name type="ordered locus">ECH_0727</name>
</gene>
<reference key="1">
    <citation type="journal article" date="2006" name="PLoS Genet.">
        <title>Comparative genomics of emerging human ehrlichiosis agents.</title>
        <authorList>
            <person name="Dunning Hotopp J.C."/>
            <person name="Lin M."/>
            <person name="Madupu R."/>
            <person name="Crabtree J."/>
            <person name="Angiuoli S.V."/>
            <person name="Eisen J.A."/>
            <person name="Seshadri R."/>
            <person name="Ren Q."/>
            <person name="Wu M."/>
            <person name="Utterback T.R."/>
            <person name="Smith S."/>
            <person name="Lewis M."/>
            <person name="Khouri H."/>
            <person name="Zhang C."/>
            <person name="Niu H."/>
            <person name="Lin Q."/>
            <person name="Ohashi N."/>
            <person name="Zhi N."/>
            <person name="Nelson W.C."/>
            <person name="Brinkac L.M."/>
            <person name="Dodson R.J."/>
            <person name="Rosovitz M.J."/>
            <person name="Sundaram J.P."/>
            <person name="Daugherty S.C."/>
            <person name="Davidsen T."/>
            <person name="Durkin A.S."/>
            <person name="Gwinn M.L."/>
            <person name="Haft D.H."/>
            <person name="Selengut J.D."/>
            <person name="Sullivan S.A."/>
            <person name="Zafar N."/>
            <person name="Zhou L."/>
            <person name="Benahmed F."/>
            <person name="Forberger H."/>
            <person name="Halpin R."/>
            <person name="Mulligan S."/>
            <person name="Robinson J."/>
            <person name="White O."/>
            <person name="Rikihisa Y."/>
            <person name="Tettelin H."/>
        </authorList>
    </citation>
    <scope>NUCLEOTIDE SEQUENCE [LARGE SCALE GENOMIC DNA]</scope>
    <source>
        <strain>ATCC CRL-10679 / Arkansas</strain>
    </source>
</reference>
<proteinExistence type="inferred from homology"/>
<accession>Q2GGA3</accession>
<protein>
    <recommendedName>
        <fullName evidence="1">Small ribosomal subunit protein uS15</fullName>
    </recommendedName>
    <alternativeName>
        <fullName evidence="2">30S ribosomal protein S15</fullName>
    </alternativeName>
</protein>
<keyword id="KW-1185">Reference proteome</keyword>
<keyword id="KW-0687">Ribonucleoprotein</keyword>
<keyword id="KW-0689">Ribosomal protein</keyword>
<keyword id="KW-0694">RNA-binding</keyword>
<keyword id="KW-0699">rRNA-binding</keyword>
<name>RS15_EHRCR</name>
<evidence type="ECO:0000255" key="1">
    <source>
        <dbReference type="HAMAP-Rule" id="MF_01343"/>
    </source>
</evidence>
<evidence type="ECO:0000305" key="2"/>
<organism>
    <name type="scientific">Ehrlichia chaffeensis (strain ATCC CRL-10679 / Arkansas)</name>
    <dbReference type="NCBI Taxonomy" id="205920"/>
    <lineage>
        <taxon>Bacteria</taxon>
        <taxon>Pseudomonadati</taxon>
        <taxon>Pseudomonadota</taxon>
        <taxon>Alphaproteobacteria</taxon>
        <taxon>Rickettsiales</taxon>
        <taxon>Anaplasmataceae</taxon>
        <taxon>Ehrlichia</taxon>
    </lineage>
</organism>
<dbReference type="EMBL" id="CP000236">
    <property type="protein sequence ID" value="ABD44901.1"/>
    <property type="molecule type" value="Genomic_DNA"/>
</dbReference>
<dbReference type="RefSeq" id="WP_006010429.1">
    <property type="nucleotide sequence ID" value="NC_007799.1"/>
</dbReference>
<dbReference type="SMR" id="Q2GGA3"/>
<dbReference type="STRING" id="205920.ECH_0727"/>
<dbReference type="KEGG" id="ech:ECH_0727"/>
<dbReference type="eggNOG" id="COG0184">
    <property type="taxonomic scope" value="Bacteria"/>
</dbReference>
<dbReference type="HOGENOM" id="CLU_148518_0_0_5"/>
<dbReference type="OrthoDB" id="9799262at2"/>
<dbReference type="Proteomes" id="UP000008320">
    <property type="component" value="Chromosome"/>
</dbReference>
<dbReference type="GO" id="GO:0022627">
    <property type="term" value="C:cytosolic small ribosomal subunit"/>
    <property type="evidence" value="ECO:0007669"/>
    <property type="project" value="TreeGrafter"/>
</dbReference>
<dbReference type="GO" id="GO:0019843">
    <property type="term" value="F:rRNA binding"/>
    <property type="evidence" value="ECO:0007669"/>
    <property type="project" value="UniProtKB-UniRule"/>
</dbReference>
<dbReference type="GO" id="GO:0003735">
    <property type="term" value="F:structural constituent of ribosome"/>
    <property type="evidence" value="ECO:0007669"/>
    <property type="project" value="InterPro"/>
</dbReference>
<dbReference type="GO" id="GO:0006412">
    <property type="term" value="P:translation"/>
    <property type="evidence" value="ECO:0007669"/>
    <property type="project" value="UniProtKB-UniRule"/>
</dbReference>
<dbReference type="CDD" id="cd00353">
    <property type="entry name" value="Ribosomal_S15p_S13e"/>
    <property type="match status" value="1"/>
</dbReference>
<dbReference type="FunFam" id="1.10.287.10:FF:000002">
    <property type="entry name" value="30S ribosomal protein S15"/>
    <property type="match status" value="1"/>
</dbReference>
<dbReference type="Gene3D" id="6.10.250.3130">
    <property type="match status" value="1"/>
</dbReference>
<dbReference type="Gene3D" id="1.10.287.10">
    <property type="entry name" value="S15/NS1, RNA-binding"/>
    <property type="match status" value="1"/>
</dbReference>
<dbReference type="HAMAP" id="MF_01343_B">
    <property type="entry name" value="Ribosomal_uS15_B"/>
    <property type="match status" value="1"/>
</dbReference>
<dbReference type="InterPro" id="IPR000589">
    <property type="entry name" value="Ribosomal_uS15"/>
</dbReference>
<dbReference type="InterPro" id="IPR005290">
    <property type="entry name" value="Ribosomal_uS15_bac-type"/>
</dbReference>
<dbReference type="InterPro" id="IPR009068">
    <property type="entry name" value="uS15_NS1_RNA-bd_sf"/>
</dbReference>
<dbReference type="NCBIfam" id="TIGR00952">
    <property type="entry name" value="S15_bact"/>
    <property type="match status" value="1"/>
</dbReference>
<dbReference type="PANTHER" id="PTHR23321">
    <property type="entry name" value="RIBOSOMAL PROTEIN S15, BACTERIAL AND ORGANELLAR"/>
    <property type="match status" value="1"/>
</dbReference>
<dbReference type="PANTHER" id="PTHR23321:SF26">
    <property type="entry name" value="SMALL RIBOSOMAL SUBUNIT PROTEIN US15M"/>
    <property type="match status" value="1"/>
</dbReference>
<dbReference type="Pfam" id="PF00312">
    <property type="entry name" value="Ribosomal_S15"/>
    <property type="match status" value="1"/>
</dbReference>
<dbReference type="SMART" id="SM01387">
    <property type="entry name" value="Ribosomal_S15"/>
    <property type="match status" value="1"/>
</dbReference>
<dbReference type="SUPFAM" id="SSF47060">
    <property type="entry name" value="S15/NS1 RNA-binding domain"/>
    <property type="match status" value="1"/>
</dbReference>
<comment type="function">
    <text evidence="1">One of the primary rRNA binding proteins, it binds directly to 16S rRNA where it helps nucleate assembly of the platform of the 30S subunit by binding and bridging several RNA helices of the 16S rRNA.</text>
</comment>
<comment type="function">
    <text evidence="1">Forms an intersubunit bridge (bridge B4) with the 23S rRNA of the 50S subunit in the ribosome.</text>
</comment>
<comment type="subunit">
    <text evidence="1">Part of the 30S ribosomal subunit. Forms a bridge to the 50S subunit in the 70S ribosome, contacting the 23S rRNA.</text>
</comment>
<comment type="similarity">
    <text evidence="1">Belongs to the universal ribosomal protein uS15 family.</text>
</comment>
<feature type="chain" id="PRO_0000255492" description="Small ribosomal subunit protein uS15">
    <location>
        <begin position="1"/>
        <end position="93"/>
    </location>
</feature>
<sequence>MSITRERKSELISEYCLKKDDTGSSFVQCAILSERIRNLTEHLKVHKKDFHCRRGLMVLVCRRRNVLQYVRKKYGDSEYLALIKRLGIRDIFH</sequence>